<feature type="chain" id="PRO_0000369870" description="Inner capsid protein VP2">
    <location>
        <begin position="1"/>
        <end position="884"/>
    </location>
</feature>
<reference key="1">
    <citation type="journal article" date="2002" name="Virus Res.">
        <title>Human group C rotavirus: completion of the genome sequence and gene coding assignments of a non-cultivatable rotavirus.</title>
        <authorList>
            <person name="Chen Z."/>
            <person name="Lambden P.R."/>
            <person name="Lau J."/>
            <person name="Caul E.O."/>
            <person name="Clarke I.N."/>
        </authorList>
    </citation>
    <scope>NUCLEOTIDE SEQUENCE [GENOMIC RNA]</scope>
</reference>
<accession>Q91E96</accession>
<protein>
    <recommendedName>
        <fullName evidence="1">Inner capsid protein VP2</fullName>
    </recommendedName>
</protein>
<organismHost>
    <name type="scientific">Homo sapiens</name>
    <name type="common">Human</name>
    <dbReference type="NCBI Taxonomy" id="9606"/>
</organismHost>
<organism>
    <name type="scientific">Rotavirus C (isolate RVC/Human/United Kingdom/Bristol/1989)</name>
    <name type="common">RV-C</name>
    <dbReference type="NCBI Taxonomy" id="31567"/>
    <lineage>
        <taxon>Viruses</taxon>
        <taxon>Riboviria</taxon>
        <taxon>Orthornavirae</taxon>
        <taxon>Duplornaviricota</taxon>
        <taxon>Resentoviricetes</taxon>
        <taxon>Reovirales</taxon>
        <taxon>Sedoreoviridae</taxon>
        <taxon>Rotavirus</taxon>
        <taxon>Rotavirus C</taxon>
    </lineage>
</organism>
<proteinExistence type="inferred from homology"/>
<keyword id="KW-0167">Capsid protein</keyword>
<keyword id="KW-1153">Inner capsid protein</keyword>
<keyword id="KW-1185">Reference proteome</keyword>
<keyword id="KW-0694">RNA-binding</keyword>
<keyword id="KW-1141">T=2 icosahedral capsid protein</keyword>
<keyword id="KW-0946">Virion</keyword>
<comment type="function">
    <text evidence="1">Inner capsid protein that self-assembles to form an icosahedral capsid with a T=2 symmetry, which consists of 120 copies of VP2, with channels at each of its five-fold vertices. This capsid constitutes the innermost concentric layer of the viral mature particle. It encapsidates the polymerase VP1, the capping enzyme VP3 and the genomic dsRNA, thereby defining the core. The innermost VP2 capsid and the intermediate VP6 capsid remain intact following cell entry to protect the dsRNA from degradation and to prevent unfavorable antiviral responses in the host cell during all the replication cycle of the virus. Nascent transcripts are transcribed within the structural confines of this double-layered particle (DLP) and are extruded through the channels formed by VP2 N-termini. VP2 is required for the replicase activity of VP1 polymerase. Probably recruits a copy of a VP1-VP3 complex, potentially along with a segment of plus-strand RNA, as a decamer of VP2 assembles. May activate the autoinhibited VP1/RNA complex to coordinate packaging and genome replication.</text>
</comment>
<comment type="subunit">
    <text evidence="1">Homodecamer; each decamer is made up of two conformers of VP2, called VP2A and VP2B. Interacts with a VP1-VP3 complex. Interacts with the intermediate capsid protein VP6. Interacts with NSP5. Interacts (via N-terminus) with NSP2.</text>
</comment>
<comment type="subcellular location">
    <subcellularLocation>
        <location evidence="1">Virion</location>
    </subcellularLocation>
    <text evidence="1">Inner capsid protein. Also found in spherical cytoplasmic structures, called virus factories, that appear early after infection and are the site of viral replication and packaging.</text>
</comment>
<comment type="similarity">
    <text evidence="1">Belongs to the rotavirus VP2 family.</text>
</comment>
<evidence type="ECO:0000255" key="1">
    <source>
        <dbReference type="HAMAP-Rule" id="MF_04123"/>
    </source>
</evidence>
<dbReference type="EMBL" id="AJ303139">
    <property type="protein sequence ID" value="CAC44890.1"/>
    <property type="molecule type" value="Genomic_RNA"/>
</dbReference>
<dbReference type="RefSeq" id="YP_392489.1">
    <property type="nucleotide sequence ID" value="NC_007546.1"/>
</dbReference>
<dbReference type="SMR" id="Q91E96"/>
<dbReference type="GeneID" id="3773136"/>
<dbReference type="KEGG" id="vg:3773136"/>
<dbReference type="Proteomes" id="UP000007664">
    <property type="component" value="Genome"/>
</dbReference>
<dbReference type="GO" id="GO:0039616">
    <property type="term" value="C:T=2 icosahedral viral capsid"/>
    <property type="evidence" value="ECO:0007669"/>
    <property type="project" value="UniProtKB-UniRule"/>
</dbReference>
<dbReference type="GO" id="GO:0039625">
    <property type="term" value="C:viral inner capsid"/>
    <property type="evidence" value="ECO:0007669"/>
    <property type="project" value="UniProtKB-UniRule"/>
</dbReference>
<dbReference type="GO" id="GO:0019013">
    <property type="term" value="C:viral nucleocapsid"/>
    <property type="evidence" value="ECO:0007669"/>
    <property type="project" value="UniProtKB-UniRule"/>
</dbReference>
<dbReference type="GO" id="GO:0003723">
    <property type="term" value="F:RNA binding"/>
    <property type="evidence" value="ECO:0007669"/>
    <property type="project" value="UniProtKB-UniRule"/>
</dbReference>
<dbReference type="HAMAP" id="MF_04123">
    <property type="entry name" value="Rota_VP2"/>
    <property type="match status" value="1"/>
</dbReference>
<dbReference type="InterPro" id="IPR007779">
    <property type="entry name" value="Rotavirus_VP2"/>
</dbReference>
<dbReference type="Pfam" id="PF05087">
    <property type="entry name" value="Rota_VP2"/>
    <property type="match status" value="1"/>
</dbReference>
<sequence length="884" mass="101673">MISRNRRRNNQQKNIEKEKQLETIINKEVKENKDSMKEDKLVVTEESNGDVTTAKEQSNNINLQKNDLVKEVMNIQNQTLNTVVTENKVEIEEIVKKYIPSYNTDSLIVKKLTEIQESSAKTYNTLFRLFTPVKSYLYDINGEKKLSTRWYWKLLKDDLPAGDYSVRQFFLSLYLNVLEEMPDYIMLRDMAVDNPYSAEAGKIVDGKSKEILIELYQDQMTEGYIRRYMSELRHKISGETNTAKYPAILHPVDNELNQYFLEHQLIQPLTTRNIAELIPTQLYHDPNYVFNIDAAFLTNSRFVPPYLTQDRIGLHDGFESIWDSKTHADYVSARRFIPDLTELVDAEKQIKEMAAHLQLEAITVQVESQFLAGISAAAANEAFKFIIGSVLSTRTIAVEFITSNYMSLASCMYLMTIMPSEIFLRESLVAMQLAIINTLIYPALGLAQMHYQAGEVRTPFELAEMQVANRSIRQWLHHCNTLQFGRQITEGIIHLRFTNDIMTGRIVNLFSTMLVALSSQPFATYPLDYKRSVQRALQLLSNRTAQIADLTRLIVYNYTTLSACIVMNMHLVGTLTVERIQATSLTSLMMLISNKTVIPEPSSLFSYFSSNINFLTNYNEQIDNVVAEIMAAYRLNLYQQKMLMLVTRFVSKLYIFDAPKIPPDQMYRLRNRLRNIPVERRRADVFRIIMNNRDLIEKTSERICQGVLLSYTPMPLTYVEDVGLTNVINDTNSFQIINIEEIEKTGDYSAITNALLRDTPIILKGAIPYVTNSSVIDVLSKVDTTVFASIVKDRDISKLKPIKFIINSDSSEYYLVHNNKWTPTTTTAVYKARSQQFDIQHSVSMLESNLFFVVYNDLFKYIKTTTVLPINAVSYDGARIMQET</sequence>
<name>VP2_ROTHC</name>